<evidence type="ECO:0000250" key="1">
    <source>
        <dbReference type="UniProtKB" id="Q14765"/>
    </source>
</evidence>
<evidence type="ECO:0000255" key="2">
    <source>
        <dbReference type="PROSITE-ProRule" id="PRU00191"/>
    </source>
</evidence>
<evidence type="ECO:0000269" key="3">
    <source>
    </source>
</evidence>
<evidence type="ECO:0000269" key="4">
    <source>
    </source>
</evidence>
<evidence type="ECO:0000269" key="5">
    <source>
    </source>
</evidence>
<evidence type="ECO:0000269" key="6">
    <source>
    </source>
</evidence>
<evidence type="ECO:0000269" key="7">
    <source>
    </source>
</evidence>
<evidence type="ECO:0000305" key="8"/>
<evidence type="ECO:0007829" key="9">
    <source>
        <dbReference type="PDB" id="1BGF"/>
    </source>
</evidence>
<gene>
    <name type="primary">Stat4</name>
</gene>
<reference key="1">
    <citation type="journal article" date="1994" name="Proc. Natl. Acad. Sci. U.S.A.">
        <title>Stat3 and Stat4: members of the family of signal transducers and activators of transcription.</title>
        <authorList>
            <person name="Zhong Z."/>
            <person name="Wen Z."/>
            <person name="Darnell J.E. Jr."/>
        </authorList>
    </citation>
    <scope>NUCLEOTIDE SEQUENCE [MRNA]</scope>
    <scope>TISSUE SPECIFICITY</scope>
    <source>
        <tissue>Thymus</tissue>
    </source>
</reference>
<reference key="2">
    <citation type="journal article" date="1994" name="Mol. Cell. Biol.">
        <title>Stat4, a novel gamma interferon activation site-binding protein expressed in early myeloid differentiation.</title>
        <authorList>
            <person name="Yamamoto K."/>
            <person name="Quelle F.W."/>
            <person name="Thierfelder W.E."/>
            <person name="Kreider B.L."/>
            <person name="Gilbert D.J."/>
            <person name="Jenkins N.A."/>
            <person name="Copeland N.G."/>
            <person name="Silvennoinen O."/>
            <person name="Ihle J.N."/>
        </authorList>
    </citation>
    <scope>NUCLEOTIDE SEQUENCE [MRNA]</scope>
    <source>
        <strain>BALB/cJ</strain>
        <tissue>Testis</tissue>
    </source>
</reference>
<reference key="3">
    <citation type="journal article" date="1996" name="Nature">
        <title>Impaired IL-12 responses and enhanced development of Th2 cells in Stat4-deficient mice.</title>
        <authorList>
            <person name="Kaplan M.H."/>
            <person name="Sun Y.L."/>
            <person name="Hoey T."/>
            <person name="Grusby M.J."/>
        </authorList>
    </citation>
    <scope>FUNCTION</scope>
    <scope>DISRUPTION PHENOTYPE</scope>
</reference>
<reference key="4">
    <citation type="journal article" date="2004" name="Int. Immunol.">
        <title>A mechanism underlying STAT4-mediated up-regulation of IFN-gamma induction inTCR-triggered T cells.</title>
        <authorList>
            <person name="Park W.R."/>
            <person name="Nakahira M."/>
            <person name="Sugimoto N."/>
            <person name="Bian Y."/>
            <person name="Yashiro-Ohtani Y."/>
            <person name="Zhou X.Y."/>
            <person name="Yang Y.F."/>
            <person name="Hamaoka T."/>
            <person name="Fujiwara H."/>
        </authorList>
    </citation>
    <scope>FUNCTION</scope>
    <scope>INTERACTION WITH JUN</scope>
</reference>
<reference key="5">
    <citation type="journal article" date="2008" name="Int. Immunol.">
        <title>BART is essential for nuclear retention of STAT3.</title>
        <authorList>
            <person name="Muromoto R."/>
            <person name="Sekine Y."/>
            <person name="Imoto S."/>
            <person name="Ikeda O."/>
            <person name="Okayama T."/>
            <person name="Sato N."/>
            <person name="Matsuda T."/>
        </authorList>
    </citation>
    <scope>INTERACTION WITH ARL2BP</scope>
</reference>
<reference key="6">
    <citation type="journal article" date="2010" name="Cell">
        <title>A tissue-specific atlas of mouse protein phosphorylation and expression.</title>
        <authorList>
            <person name="Huttlin E.L."/>
            <person name="Jedrychowski M.P."/>
            <person name="Elias J.E."/>
            <person name="Goswami T."/>
            <person name="Rad R."/>
            <person name="Beausoleil S.A."/>
            <person name="Villen J."/>
            <person name="Haas W."/>
            <person name="Sowa M.E."/>
            <person name="Gygi S.P."/>
        </authorList>
    </citation>
    <scope>IDENTIFICATION BY MASS SPECTROMETRY [LARGE SCALE ANALYSIS]</scope>
    <source>
        <tissue>Testis</tissue>
    </source>
</reference>
<reference key="7">
    <citation type="journal article" date="2021" name="JCI Insight">
        <title>STAT4 is expressed in neutrophils and promotes antimicrobial immunity.</title>
        <authorList>
            <person name="Mehrpouya-Bahrami P."/>
            <person name="Moriarty A.K."/>
            <person name="De Melo P."/>
            <person name="Keeter W.C."/>
            <person name="Alakhras N.S."/>
            <person name="Nelson A.S."/>
            <person name="Hoover M."/>
            <person name="Barrios M.S."/>
            <person name="Nadler J.L."/>
            <person name="Serezani C.H."/>
            <person name="Kaplan M.H."/>
            <person name="Galkina E.V."/>
        </authorList>
    </citation>
    <scope>FUNCTION</scope>
    <scope>DISRUPTION PHENOTYPE</scope>
</reference>
<reference key="8">
    <citation type="journal article" date="1998" name="Science">
        <title>Structure of the amino-terminal protein interaction domain of STAT-4.</title>
        <authorList>
            <person name="Vinkemeier U."/>
            <person name="Moarefi I."/>
            <person name="Darnell J.E. Jr."/>
            <person name="Kuriyan J."/>
        </authorList>
    </citation>
    <scope>X-RAY CRYSTALLOGRAPHY (1.45 ANGSTROMS) OF 1-123</scope>
</reference>
<sequence length="749" mass="85941">MSQWNQVQQLEIKFLEQVDQFYDDNFPMEIRHLLAQWIETQDWEVASNNETMATILLQNLLIQLDEQLGRVSKEKNLLLIHNLKRIRKVLQGKFHGNPMHVAVVISNCLREERRILAAANMPIQGPLEKSLQSSSVSERQRNVEHKVSAIKNSVQMTEQDTKYLEDLQDEFDYRYKTIQTMDQGDKNSILVNQEVLTLLQEMLNSLDFKRKEALSKMTQIVNETDLLMNSMLLEELQDWKKRQQIACIGGPLHNGLDQLQNCFTLLAESLFQLRQQLEKLQEQSTKMTYEGDPIPAQRAHLLERATFLIYNLFKNSFVVERQPCMPTHPQRPMVLKTLIQFTVKLRLLIKLPELNYQVKVKASIDKNVSTLSNRRFVLCGTHVKAMSSEESSNGSLSVEFRHLQPKEMKCSTGSKGNEGCHMVTEELHSITFETQICLYGLTINLETSSLPVVMISNVSQLPNAWASIIWYNVSTNDSQNLVFFNNPPSVTLGQLLEVMSWQFSSYVGRGLNSEQLNMLAEKLTVQSNYNDGHLTWAKFCKEHLPGKTFTFWTWLEAILDLIKKHILPLWIDGYIMGFVSKEKERLLLKDKMPGTFLLRFSESHLGGITFTWVDQSENGEVRFHSVEPYNKGRLSALAFADILRDYKVIMAENIPENPLKYLYPDIPKDKAFGKHYSSQPCEVSRPTERGDKGYVPSVFIPISTIRSDSTEPQSPSDLLPMSPSAYAVLRENLSPTTIETAMNSPYSAE</sequence>
<proteinExistence type="evidence at protein level"/>
<name>STAT4_MOUSE</name>
<protein>
    <recommendedName>
        <fullName>Signal transducer and activator of transcription 4</fullName>
    </recommendedName>
</protein>
<organism>
    <name type="scientific">Mus musculus</name>
    <name type="common">Mouse</name>
    <dbReference type="NCBI Taxonomy" id="10090"/>
    <lineage>
        <taxon>Eukaryota</taxon>
        <taxon>Metazoa</taxon>
        <taxon>Chordata</taxon>
        <taxon>Craniata</taxon>
        <taxon>Vertebrata</taxon>
        <taxon>Euteleostomi</taxon>
        <taxon>Mammalia</taxon>
        <taxon>Eutheria</taxon>
        <taxon>Euarchontoglires</taxon>
        <taxon>Glires</taxon>
        <taxon>Rodentia</taxon>
        <taxon>Myomorpha</taxon>
        <taxon>Muroidea</taxon>
        <taxon>Muridae</taxon>
        <taxon>Murinae</taxon>
        <taxon>Mus</taxon>
        <taxon>Mus</taxon>
    </lineage>
</organism>
<accession>P42228</accession>
<dbReference type="EMBL" id="U06923">
    <property type="protein sequence ID" value="AAA19453.1"/>
    <property type="molecule type" value="mRNA"/>
</dbReference>
<dbReference type="EMBL" id="U09351">
    <property type="protein sequence ID" value="AAA19692.1"/>
    <property type="molecule type" value="mRNA"/>
</dbReference>
<dbReference type="PIR" id="A56047">
    <property type="entry name" value="A56047"/>
</dbReference>
<dbReference type="RefSeq" id="NP_001295195.1">
    <property type="nucleotide sequence ID" value="NM_001308266.1"/>
</dbReference>
<dbReference type="RefSeq" id="NP_035617.1">
    <property type="nucleotide sequence ID" value="NM_011487.5"/>
</dbReference>
<dbReference type="PDB" id="1BGF">
    <property type="method" value="X-ray"/>
    <property type="resolution" value="1.45 A"/>
    <property type="chains" value="A=2-123"/>
</dbReference>
<dbReference type="PDBsum" id="1BGF"/>
<dbReference type="BMRB" id="P42228"/>
<dbReference type="SMR" id="P42228"/>
<dbReference type="BioGRID" id="203524">
    <property type="interactions" value="1"/>
</dbReference>
<dbReference type="DIP" id="DIP-1170N"/>
<dbReference type="FunCoup" id="P42228">
    <property type="interactions" value="1350"/>
</dbReference>
<dbReference type="IntAct" id="P42228">
    <property type="interactions" value="2"/>
</dbReference>
<dbReference type="STRING" id="10090.ENSMUSP00000027277"/>
<dbReference type="iPTMnet" id="P42228"/>
<dbReference type="PhosphoSitePlus" id="P42228"/>
<dbReference type="SwissPalm" id="P42228"/>
<dbReference type="PaxDb" id="10090-ENSMUSP00000027277"/>
<dbReference type="ProteomicsDB" id="257369"/>
<dbReference type="DNASU" id="20849"/>
<dbReference type="GeneID" id="20849"/>
<dbReference type="KEGG" id="mmu:20849"/>
<dbReference type="AGR" id="MGI:103062"/>
<dbReference type="CTD" id="6775"/>
<dbReference type="MGI" id="MGI:103062">
    <property type="gene designation" value="Stat4"/>
</dbReference>
<dbReference type="eggNOG" id="KOG3667">
    <property type="taxonomic scope" value="Eukaryota"/>
</dbReference>
<dbReference type="InParanoid" id="P42228"/>
<dbReference type="OrthoDB" id="19300at2759"/>
<dbReference type="PhylomeDB" id="P42228"/>
<dbReference type="Reactome" id="R-MMU-8854691">
    <property type="pathway name" value="Interleukin-20 family signaling"/>
</dbReference>
<dbReference type="Reactome" id="R-MMU-8984722">
    <property type="pathway name" value="Interleukin-35 Signalling"/>
</dbReference>
<dbReference type="Reactome" id="R-MMU-9020591">
    <property type="pathway name" value="Interleukin-12 signaling"/>
</dbReference>
<dbReference type="Reactome" id="R-MMU-9020933">
    <property type="pathway name" value="Interleukin-23 signaling"/>
</dbReference>
<dbReference type="Reactome" id="R-MMU-9020958">
    <property type="pathway name" value="Interleukin-21 signaling"/>
</dbReference>
<dbReference type="BioGRID-ORCS" id="20849">
    <property type="hits" value="3 hits in 82 CRISPR screens"/>
</dbReference>
<dbReference type="ChiTaRS" id="Stat4">
    <property type="organism name" value="mouse"/>
</dbReference>
<dbReference type="EvolutionaryTrace" id="P42228"/>
<dbReference type="PRO" id="PR:P42228"/>
<dbReference type="Proteomes" id="UP000000589">
    <property type="component" value="Unplaced"/>
</dbReference>
<dbReference type="RNAct" id="P42228">
    <property type="molecule type" value="protein"/>
</dbReference>
<dbReference type="GO" id="GO:0005829">
    <property type="term" value="C:cytosol"/>
    <property type="evidence" value="ECO:0000304"/>
    <property type="project" value="Reactome"/>
</dbReference>
<dbReference type="GO" id="GO:0005634">
    <property type="term" value="C:nucleus"/>
    <property type="evidence" value="ECO:0000314"/>
    <property type="project" value="MGI"/>
</dbReference>
<dbReference type="GO" id="GO:0003677">
    <property type="term" value="F:DNA binding"/>
    <property type="evidence" value="ECO:0000314"/>
    <property type="project" value="MGI"/>
</dbReference>
<dbReference type="GO" id="GO:0001228">
    <property type="term" value="F:DNA-binding transcription activator activity, RNA polymerase II-specific"/>
    <property type="evidence" value="ECO:0000315"/>
    <property type="project" value="NTNU_SB"/>
</dbReference>
<dbReference type="GO" id="GO:0003700">
    <property type="term" value="F:DNA-binding transcription factor activity"/>
    <property type="evidence" value="ECO:0000250"/>
    <property type="project" value="UniProtKB"/>
</dbReference>
<dbReference type="GO" id="GO:0000978">
    <property type="term" value="F:RNA polymerase II cis-regulatory region sequence-specific DNA binding"/>
    <property type="evidence" value="ECO:0000314"/>
    <property type="project" value="NTNU_SB"/>
</dbReference>
<dbReference type="GO" id="GO:0043565">
    <property type="term" value="F:sequence-specific DNA binding"/>
    <property type="evidence" value="ECO:0000314"/>
    <property type="project" value="MGI"/>
</dbReference>
<dbReference type="GO" id="GO:0019221">
    <property type="term" value="P:cytokine-mediated signaling pathway"/>
    <property type="evidence" value="ECO:0000314"/>
    <property type="project" value="MGI"/>
</dbReference>
<dbReference type="GO" id="GO:0061484">
    <property type="term" value="P:hematopoietic stem cell homeostasis"/>
    <property type="evidence" value="ECO:0000315"/>
    <property type="project" value="MGI"/>
</dbReference>
<dbReference type="GO" id="GO:0070661">
    <property type="term" value="P:leukocyte proliferation"/>
    <property type="evidence" value="ECO:0000314"/>
    <property type="project" value="MGI"/>
</dbReference>
<dbReference type="GO" id="GO:0010628">
    <property type="term" value="P:positive regulation of gene expression"/>
    <property type="evidence" value="ECO:0000316"/>
    <property type="project" value="MGI"/>
</dbReference>
<dbReference type="GO" id="GO:0045944">
    <property type="term" value="P:positive regulation of transcription by RNA polymerase II"/>
    <property type="evidence" value="ECO:0000314"/>
    <property type="project" value="MGI"/>
</dbReference>
<dbReference type="CDD" id="cd10375">
    <property type="entry name" value="SH2_STAT4"/>
    <property type="match status" value="1"/>
</dbReference>
<dbReference type="CDD" id="cd16854">
    <property type="entry name" value="STAT4_CCD"/>
    <property type="match status" value="1"/>
</dbReference>
<dbReference type="CDD" id="cd16848">
    <property type="entry name" value="STAT4_DBD"/>
    <property type="match status" value="1"/>
</dbReference>
<dbReference type="FunFam" id="1.10.238.10:FF:000012">
    <property type="entry name" value="Signal transducer and activator of transcription"/>
    <property type="match status" value="1"/>
</dbReference>
<dbReference type="FunFam" id="1.10.532.10:FF:000001">
    <property type="entry name" value="Signal transducer and activator of transcription"/>
    <property type="match status" value="1"/>
</dbReference>
<dbReference type="FunFam" id="1.20.1050.20:FF:000001">
    <property type="entry name" value="Signal transducer and activator of transcription"/>
    <property type="match status" value="1"/>
</dbReference>
<dbReference type="FunFam" id="3.30.505.10:FF:000003">
    <property type="entry name" value="Signal transducer and activator of transcription"/>
    <property type="match status" value="1"/>
</dbReference>
<dbReference type="FunFam" id="2.60.40.630:FF:000007">
    <property type="entry name" value="Signal transducer and activator of transcription 3"/>
    <property type="match status" value="1"/>
</dbReference>
<dbReference type="FunFam" id="2.60.40.630:FF:000008">
    <property type="entry name" value="signal transducer and activator of transcription 4"/>
    <property type="match status" value="1"/>
</dbReference>
<dbReference type="Gene3D" id="1.10.238.10">
    <property type="entry name" value="EF-hand"/>
    <property type="match status" value="1"/>
</dbReference>
<dbReference type="Gene3D" id="3.30.505.10">
    <property type="entry name" value="SH2 domain"/>
    <property type="match status" value="1"/>
</dbReference>
<dbReference type="Gene3D" id="1.20.1050.20">
    <property type="entry name" value="STAT transcription factor, all-alpha domain"/>
    <property type="match status" value="1"/>
</dbReference>
<dbReference type="Gene3D" id="2.60.40.630">
    <property type="entry name" value="STAT transcription factor, DNA-binding domain"/>
    <property type="match status" value="1"/>
</dbReference>
<dbReference type="Gene3D" id="1.10.532.10">
    <property type="entry name" value="STAT transcription factor, N-terminal domain"/>
    <property type="match status" value="1"/>
</dbReference>
<dbReference type="IDEAL" id="IID50278"/>
<dbReference type="InterPro" id="IPR008967">
    <property type="entry name" value="p53-like_TF_DNA-bd_sf"/>
</dbReference>
<dbReference type="InterPro" id="IPR000980">
    <property type="entry name" value="SH2"/>
</dbReference>
<dbReference type="InterPro" id="IPR036860">
    <property type="entry name" value="SH2_dom_sf"/>
</dbReference>
<dbReference type="InterPro" id="IPR001217">
    <property type="entry name" value="STAT"/>
</dbReference>
<dbReference type="InterPro" id="IPR046991">
    <property type="entry name" value="STAT4_CCD"/>
</dbReference>
<dbReference type="InterPro" id="IPR029839">
    <property type="entry name" value="STAT4_DBD"/>
</dbReference>
<dbReference type="InterPro" id="IPR035856">
    <property type="entry name" value="STAT4_SH2"/>
</dbReference>
<dbReference type="InterPro" id="IPR048988">
    <property type="entry name" value="STAT_linker"/>
</dbReference>
<dbReference type="InterPro" id="IPR036535">
    <property type="entry name" value="STAT_N_sf"/>
</dbReference>
<dbReference type="InterPro" id="IPR013800">
    <property type="entry name" value="STAT_TF_alpha"/>
</dbReference>
<dbReference type="InterPro" id="IPR015988">
    <property type="entry name" value="STAT_TF_coiled-coil"/>
</dbReference>
<dbReference type="InterPro" id="IPR013801">
    <property type="entry name" value="STAT_TF_DNA-bd"/>
</dbReference>
<dbReference type="InterPro" id="IPR012345">
    <property type="entry name" value="STAT_TF_DNA-bd_N"/>
</dbReference>
<dbReference type="InterPro" id="IPR013799">
    <property type="entry name" value="STAT_TF_prot_interaction"/>
</dbReference>
<dbReference type="PANTHER" id="PTHR11801">
    <property type="entry name" value="SIGNAL TRANSDUCER AND ACTIVATOR OF TRANSCRIPTION"/>
    <property type="match status" value="1"/>
</dbReference>
<dbReference type="Pfam" id="PF00017">
    <property type="entry name" value="SH2"/>
    <property type="match status" value="1"/>
</dbReference>
<dbReference type="Pfam" id="PF01017">
    <property type="entry name" value="STAT_alpha"/>
    <property type="match status" value="1"/>
</dbReference>
<dbReference type="Pfam" id="PF02864">
    <property type="entry name" value="STAT_bind"/>
    <property type="match status" value="1"/>
</dbReference>
<dbReference type="Pfam" id="PF02865">
    <property type="entry name" value="STAT_int"/>
    <property type="match status" value="1"/>
</dbReference>
<dbReference type="Pfam" id="PF21354">
    <property type="entry name" value="STAT_linker"/>
    <property type="match status" value="1"/>
</dbReference>
<dbReference type="SMART" id="SM00964">
    <property type="entry name" value="STAT_int"/>
    <property type="match status" value="1"/>
</dbReference>
<dbReference type="SUPFAM" id="SSF49417">
    <property type="entry name" value="p53-like transcription factors"/>
    <property type="match status" value="1"/>
</dbReference>
<dbReference type="SUPFAM" id="SSF55550">
    <property type="entry name" value="SH2 domain"/>
    <property type="match status" value="1"/>
</dbReference>
<dbReference type="SUPFAM" id="SSF47655">
    <property type="entry name" value="STAT"/>
    <property type="match status" value="1"/>
</dbReference>
<dbReference type="SUPFAM" id="SSF48092">
    <property type="entry name" value="Transcription factor STAT-4 N-domain"/>
    <property type="match status" value="1"/>
</dbReference>
<dbReference type="PROSITE" id="PS50001">
    <property type="entry name" value="SH2"/>
    <property type="match status" value="1"/>
</dbReference>
<keyword id="KW-0002">3D-structure</keyword>
<keyword id="KW-0007">Acetylation</keyword>
<keyword id="KW-0010">Activator</keyword>
<keyword id="KW-0963">Cytoplasm</keyword>
<keyword id="KW-0238">DNA-binding</keyword>
<keyword id="KW-0539">Nucleus</keyword>
<keyword id="KW-0597">Phosphoprotein</keyword>
<keyword id="KW-1185">Reference proteome</keyword>
<keyword id="KW-0727">SH2 domain</keyword>
<keyword id="KW-0804">Transcription</keyword>
<keyword id="KW-0805">Transcription regulation</keyword>
<comment type="function">
    <text evidence="1 3 5 7">Transcriptional regulator mainly expressed in hematopoietic cells that plays a critical role in cellular growth, differentiation and immune response. Plays a key role in the differentiation of T-helper 1 cells and the production of interferon-gamma (PubMed:8700209). Also participates in multiple neutrophil functions including chemotaxis and production of the neutrophil extracellular traps (PubMed:34138758). After IL12 binding to its receptor IL12RB2, STAT4 interacts with the intracellular domain of IL12RB2 and becomes tyrosine phosphorylated. Phosphorylated STAT4 then homodimerizes and migrates to the nucleus where it can recognize STAT target sequences present in IL12 responsive genes. Although IL12 appears to be the predominant activating signal, STAT4 can also be phosphorylated and activated in response to IFN-gamma stimulation via JAK1 and TYK2 and in response to different interleukins including IL23, IL2 and IL35 (By similarity). Transcription activation of IFN-gamma gene is mediated by interaction with JUN that forms a complex that efficiently interacts with the AP-1-related sequence of the IFN-gamma promoter (PubMed:14734615). In response to IFN-alpha/beta signaling, acts as a transcriptional repressor and suppresses IL5 and IL13 mRNA expression during response to T-cell receptor (TCR) activation (By similarity).</text>
</comment>
<comment type="subunit">
    <text evidence="1 3 4">Forms a homodimer or a heterodimer with a related family member (By similarity). Interacts with ARL2BP. Interacts with STAT1 (By similarity). Interacts with JUN; this complex efficiently interacts with the AP-1-related sequence of the IFN-gamma promoter (PubMed:14734615).</text>
</comment>
<comment type="interaction">
    <interactant intactId="EBI-6253572">
        <id>P42228</id>
    </interactant>
    <interactant intactId="EBI-647118">
        <id>P42225</id>
        <label>Stat1</label>
    </interactant>
    <organismsDiffer>false</organismsDiffer>
    <experiments>2</experiments>
</comment>
<comment type="subcellular location">
    <subcellularLocation>
        <location>Cytoplasm</location>
    </subcellularLocation>
    <subcellularLocation>
        <location evidence="1">Nucleus</location>
    </subcellularLocation>
    <text evidence="1">Translocated into the nucleus in response to phosphorylation.</text>
</comment>
<comment type="tissue specificity">
    <text evidence="6">Expression is restricted to testis, thymus, and spleen.</text>
</comment>
<comment type="PTM">
    <text evidence="1">Acetylation at Lys-668 is required for JAK2-mediated phosphorylation and activation of STAT4.</text>
</comment>
<comment type="PTM">
    <text evidence="1">Tyrosine phosphorylated upon IL12 and IFN-alpha activation, but not by IFN-gamma in T-lymphocytes and NK cells. Serine phosphorylation is required for maximal transcriptional activity but not for DNA binding. Phosphorylation by MAP2K6 at Ser-722 is required for full transcriptional activity induced by IL12. However this serine phosphorylation is not required for cell proliferation although critical for IFN-gamma production.</text>
</comment>
<comment type="disruption phenotype">
    <text evidence="5 7">STAT4-deficient mice are grossly indistinguishable from wild-type mice. However, the development of T-helper 1 cells in response to either IL12 or Listeria monocytogenes is strongly impaired (PubMed:8700209). In addition, mice are acutely sensitive to methicillin-resistant Staphylococcus aureus (MRSA) infection (PubMed:34138758).</text>
</comment>
<comment type="similarity">
    <text evidence="8">Belongs to the transcription factor STAT family.</text>
</comment>
<feature type="chain" id="PRO_0000182421" description="Signal transducer and activator of transcription 4">
    <location>
        <begin position="1"/>
        <end position="749"/>
    </location>
</feature>
<feature type="domain" description="SH2" evidence="2">
    <location>
        <begin position="570"/>
        <end position="665"/>
    </location>
</feature>
<feature type="modified residue" description="N6-acetyllysine" evidence="1">
    <location>
        <position position="668"/>
    </location>
</feature>
<feature type="modified residue" description="Phosphotyrosine; by JAK" evidence="1">
    <location>
        <position position="694"/>
    </location>
</feature>
<feature type="modified residue" description="Phosphoserine" evidence="1">
    <location>
        <position position="722"/>
    </location>
</feature>
<feature type="sequence conflict" description="In Ref. 2; AAA19692." evidence="8" ref="2">
    <location>
        <position position="199"/>
    </location>
</feature>
<feature type="sequence conflict" description="In Ref. 2; AAA19692." evidence="8" ref="2">
    <original>A</original>
    <variation>P</variation>
    <location>
        <position position="638"/>
    </location>
</feature>
<feature type="helix" evidence="9">
    <location>
        <begin position="3"/>
        <end position="9"/>
    </location>
</feature>
<feature type="helix" evidence="9">
    <location>
        <begin position="12"/>
        <end position="14"/>
    </location>
</feature>
<feature type="helix" evidence="9">
    <location>
        <begin position="15"/>
        <end position="18"/>
    </location>
</feature>
<feature type="helix" evidence="9">
    <location>
        <begin position="19"/>
        <end position="21"/>
    </location>
</feature>
<feature type="helix" evidence="9">
    <location>
        <begin position="28"/>
        <end position="33"/>
    </location>
</feature>
<feature type="helix" evidence="9">
    <location>
        <begin position="35"/>
        <end position="40"/>
    </location>
</feature>
<feature type="helix" evidence="9">
    <location>
        <begin position="43"/>
        <end position="46"/>
    </location>
</feature>
<feature type="helix" evidence="9">
    <location>
        <begin position="50"/>
        <end position="74"/>
    </location>
</feature>
<feature type="helix" evidence="9">
    <location>
        <begin position="77"/>
        <end position="95"/>
    </location>
</feature>
<feature type="helix" evidence="9">
    <location>
        <begin position="98"/>
        <end position="118"/>
    </location>
</feature>